<feature type="chain" id="PRO_1000063681" description="UPF0213 protein Reut_B5558">
    <location>
        <begin position="1"/>
        <end position="90"/>
    </location>
</feature>
<feature type="domain" description="GIY-YIG" evidence="1">
    <location>
        <begin position="5"/>
        <end position="80"/>
    </location>
</feature>
<evidence type="ECO:0000255" key="1">
    <source>
        <dbReference type="PROSITE-ProRule" id="PRU00977"/>
    </source>
</evidence>
<evidence type="ECO:0000305" key="2"/>
<organism>
    <name type="scientific">Cupriavidus pinatubonensis (strain JMP 134 / LMG 1197)</name>
    <name type="common">Cupriavidus necator (strain JMP 134)</name>
    <dbReference type="NCBI Taxonomy" id="264198"/>
    <lineage>
        <taxon>Bacteria</taxon>
        <taxon>Pseudomonadati</taxon>
        <taxon>Pseudomonadota</taxon>
        <taxon>Betaproteobacteria</taxon>
        <taxon>Burkholderiales</taxon>
        <taxon>Burkholderiaceae</taxon>
        <taxon>Cupriavidus</taxon>
    </lineage>
</organism>
<sequence length="90" mass="10056">MSVERQWYLYLLECTGGSIYTGITTDVARRFAQHQAGKGAKYTRSRKPLRVLGQVAFPSKSEALKAELATKRMSSAQKIAFCAKLEQPET</sequence>
<protein>
    <recommendedName>
        <fullName>UPF0213 protein Reut_B5558</fullName>
    </recommendedName>
</protein>
<name>Y5558_CUPPJ</name>
<proteinExistence type="inferred from homology"/>
<reference key="1">
    <citation type="journal article" date="2010" name="PLoS ONE">
        <title>The complete multipartite genome sequence of Cupriavidus necator JMP134, a versatile pollutant degrader.</title>
        <authorList>
            <person name="Lykidis A."/>
            <person name="Perez-Pantoja D."/>
            <person name="Ledger T."/>
            <person name="Mavromatis K."/>
            <person name="Anderson I.J."/>
            <person name="Ivanova N.N."/>
            <person name="Hooper S.D."/>
            <person name="Lapidus A."/>
            <person name="Lucas S."/>
            <person name="Gonzalez B."/>
            <person name="Kyrpides N.C."/>
        </authorList>
    </citation>
    <scope>NUCLEOTIDE SEQUENCE [LARGE SCALE GENOMIC DNA]</scope>
    <source>
        <strain>JMP134 / LMG 1197</strain>
    </source>
</reference>
<gene>
    <name type="ordered locus">Reut_B5558</name>
</gene>
<comment type="similarity">
    <text evidence="2">Belongs to the UPF0213 family.</text>
</comment>
<dbReference type="EMBL" id="CP000091">
    <property type="protein sequence ID" value="AAZ64903.1"/>
    <property type="molecule type" value="Genomic_DNA"/>
</dbReference>
<dbReference type="SMR" id="Q46PN1"/>
<dbReference type="STRING" id="264198.Reut_B5558"/>
<dbReference type="KEGG" id="reu:Reut_B5558"/>
<dbReference type="eggNOG" id="COG2827">
    <property type="taxonomic scope" value="Bacteria"/>
</dbReference>
<dbReference type="HOGENOM" id="CLU_135650_0_3_4"/>
<dbReference type="OrthoDB" id="9797095at2"/>
<dbReference type="CDD" id="cd10456">
    <property type="entry name" value="GIY-YIG_UPF0213"/>
    <property type="match status" value="1"/>
</dbReference>
<dbReference type="Gene3D" id="3.40.1440.10">
    <property type="entry name" value="GIY-YIG endonuclease"/>
    <property type="match status" value="1"/>
</dbReference>
<dbReference type="InterPro" id="IPR000305">
    <property type="entry name" value="GIY-YIG_endonuc"/>
</dbReference>
<dbReference type="InterPro" id="IPR035901">
    <property type="entry name" value="GIY-YIG_endonuc_sf"/>
</dbReference>
<dbReference type="InterPro" id="IPR050190">
    <property type="entry name" value="UPF0213_domain"/>
</dbReference>
<dbReference type="PANTHER" id="PTHR34477">
    <property type="entry name" value="UPF0213 PROTEIN YHBQ"/>
    <property type="match status" value="1"/>
</dbReference>
<dbReference type="PANTHER" id="PTHR34477:SF1">
    <property type="entry name" value="UPF0213 PROTEIN YHBQ"/>
    <property type="match status" value="1"/>
</dbReference>
<dbReference type="Pfam" id="PF01541">
    <property type="entry name" value="GIY-YIG"/>
    <property type="match status" value="1"/>
</dbReference>
<dbReference type="SUPFAM" id="SSF82771">
    <property type="entry name" value="GIY-YIG endonuclease"/>
    <property type="match status" value="1"/>
</dbReference>
<dbReference type="PROSITE" id="PS50164">
    <property type="entry name" value="GIY_YIG"/>
    <property type="match status" value="1"/>
</dbReference>
<accession>Q46PN1</accession>